<organism>
    <name type="scientific">Staphylococcus haemolyticus (strain JCSC1435)</name>
    <dbReference type="NCBI Taxonomy" id="279808"/>
    <lineage>
        <taxon>Bacteria</taxon>
        <taxon>Bacillati</taxon>
        <taxon>Bacillota</taxon>
        <taxon>Bacilli</taxon>
        <taxon>Bacillales</taxon>
        <taxon>Staphylococcaceae</taxon>
        <taxon>Staphylococcus</taxon>
    </lineage>
</organism>
<name>ILVD_STAHJ</name>
<dbReference type="EC" id="4.2.1.9" evidence="1"/>
<dbReference type="EMBL" id="AP006716">
    <property type="protein sequence ID" value="BAE04289.1"/>
    <property type="molecule type" value="Genomic_DNA"/>
</dbReference>
<dbReference type="RefSeq" id="WP_011275288.1">
    <property type="nucleotide sequence ID" value="NC_007168.1"/>
</dbReference>
<dbReference type="SMR" id="Q4L7T6"/>
<dbReference type="KEGG" id="sha:SH0980"/>
<dbReference type="eggNOG" id="COG0129">
    <property type="taxonomic scope" value="Bacteria"/>
</dbReference>
<dbReference type="HOGENOM" id="CLU_014271_4_2_9"/>
<dbReference type="OrthoDB" id="9807077at2"/>
<dbReference type="UniPathway" id="UPA00047">
    <property type="reaction ID" value="UER00057"/>
</dbReference>
<dbReference type="UniPathway" id="UPA00049">
    <property type="reaction ID" value="UER00061"/>
</dbReference>
<dbReference type="Proteomes" id="UP000000543">
    <property type="component" value="Chromosome"/>
</dbReference>
<dbReference type="GO" id="GO:0005829">
    <property type="term" value="C:cytosol"/>
    <property type="evidence" value="ECO:0007669"/>
    <property type="project" value="TreeGrafter"/>
</dbReference>
<dbReference type="GO" id="GO:0051537">
    <property type="term" value="F:2 iron, 2 sulfur cluster binding"/>
    <property type="evidence" value="ECO:0007669"/>
    <property type="project" value="UniProtKB-UniRule"/>
</dbReference>
<dbReference type="GO" id="GO:0004160">
    <property type="term" value="F:dihydroxy-acid dehydratase activity"/>
    <property type="evidence" value="ECO:0007669"/>
    <property type="project" value="UniProtKB-UniRule"/>
</dbReference>
<dbReference type="GO" id="GO:0000287">
    <property type="term" value="F:magnesium ion binding"/>
    <property type="evidence" value="ECO:0007669"/>
    <property type="project" value="UniProtKB-UniRule"/>
</dbReference>
<dbReference type="GO" id="GO:0009097">
    <property type="term" value="P:isoleucine biosynthetic process"/>
    <property type="evidence" value="ECO:0007669"/>
    <property type="project" value="UniProtKB-UniRule"/>
</dbReference>
<dbReference type="GO" id="GO:0009099">
    <property type="term" value="P:L-valine biosynthetic process"/>
    <property type="evidence" value="ECO:0007669"/>
    <property type="project" value="UniProtKB-UniRule"/>
</dbReference>
<dbReference type="FunFam" id="3.50.30.80:FF:000001">
    <property type="entry name" value="Dihydroxy-acid dehydratase"/>
    <property type="match status" value="1"/>
</dbReference>
<dbReference type="Gene3D" id="3.50.30.80">
    <property type="entry name" value="IlvD/EDD C-terminal domain-like"/>
    <property type="match status" value="1"/>
</dbReference>
<dbReference type="HAMAP" id="MF_00012">
    <property type="entry name" value="IlvD"/>
    <property type="match status" value="1"/>
</dbReference>
<dbReference type="InterPro" id="IPR042096">
    <property type="entry name" value="Dihydro-acid_dehy_C"/>
</dbReference>
<dbReference type="InterPro" id="IPR004404">
    <property type="entry name" value="DihydroxyA_deHydtase"/>
</dbReference>
<dbReference type="InterPro" id="IPR020558">
    <property type="entry name" value="DiOHA_6PGluconate_deHydtase_CS"/>
</dbReference>
<dbReference type="InterPro" id="IPR056740">
    <property type="entry name" value="ILV_EDD_C"/>
</dbReference>
<dbReference type="InterPro" id="IPR000581">
    <property type="entry name" value="ILV_EDD_N"/>
</dbReference>
<dbReference type="InterPro" id="IPR037237">
    <property type="entry name" value="IlvD/EDD_N"/>
</dbReference>
<dbReference type="NCBIfam" id="TIGR00110">
    <property type="entry name" value="ilvD"/>
    <property type="match status" value="1"/>
</dbReference>
<dbReference type="NCBIfam" id="NF002068">
    <property type="entry name" value="PRK00911.1"/>
    <property type="match status" value="1"/>
</dbReference>
<dbReference type="PANTHER" id="PTHR43661">
    <property type="entry name" value="D-XYLONATE DEHYDRATASE"/>
    <property type="match status" value="1"/>
</dbReference>
<dbReference type="PANTHER" id="PTHR43661:SF3">
    <property type="entry name" value="D-XYLONATE DEHYDRATASE YAGF-RELATED"/>
    <property type="match status" value="1"/>
</dbReference>
<dbReference type="Pfam" id="PF24877">
    <property type="entry name" value="ILV_EDD_C"/>
    <property type="match status" value="1"/>
</dbReference>
<dbReference type="Pfam" id="PF00920">
    <property type="entry name" value="ILVD_EDD_N"/>
    <property type="match status" value="1"/>
</dbReference>
<dbReference type="SUPFAM" id="SSF143975">
    <property type="entry name" value="IlvD/EDD N-terminal domain-like"/>
    <property type="match status" value="1"/>
</dbReference>
<dbReference type="SUPFAM" id="SSF52016">
    <property type="entry name" value="LeuD/IlvD-like"/>
    <property type="match status" value="1"/>
</dbReference>
<dbReference type="PROSITE" id="PS00886">
    <property type="entry name" value="ILVD_EDD_1"/>
    <property type="match status" value="1"/>
</dbReference>
<dbReference type="PROSITE" id="PS00887">
    <property type="entry name" value="ILVD_EDD_2"/>
    <property type="match status" value="1"/>
</dbReference>
<comment type="function">
    <text evidence="1">Functions in the biosynthesis of branched-chain amino acids. Catalyzes the dehydration of (2R,3R)-2,3-dihydroxy-3-methylpentanoate (2,3-dihydroxy-3-methylvalerate) into 2-oxo-3-methylpentanoate (2-oxo-3-methylvalerate) and of (2R)-2,3-dihydroxy-3-methylbutanoate (2,3-dihydroxyisovalerate) into 2-oxo-3-methylbutanoate (2-oxoisovalerate), the penultimate precursor to L-isoleucine and L-valine, respectively.</text>
</comment>
<comment type="catalytic activity">
    <reaction evidence="1">
        <text>(2R)-2,3-dihydroxy-3-methylbutanoate = 3-methyl-2-oxobutanoate + H2O</text>
        <dbReference type="Rhea" id="RHEA:24809"/>
        <dbReference type="ChEBI" id="CHEBI:11851"/>
        <dbReference type="ChEBI" id="CHEBI:15377"/>
        <dbReference type="ChEBI" id="CHEBI:49072"/>
        <dbReference type="EC" id="4.2.1.9"/>
    </reaction>
    <physiologicalReaction direction="left-to-right" evidence="1">
        <dbReference type="Rhea" id="RHEA:24810"/>
    </physiologicalReaction>
</comment>
<comment type="catalytic activity">
    <reaction evidence="1">
        <text>(2R,3R)-2,3-dihydroxy-3-methylpentanoate = (S)-3-methyl-2-oxopentanoate + H2O</text>
        <dbReference type="Rhea" id="RHEA:27694"/>
        <dbReference type="ChEBI" id="CHEBI:15377"/>
        <dbReference type="ChEBI" id="CHEBI:35146"/>
        <dbReference type="ChEBI" id="CHEBI:49258"/>
        <dbReference type="EC" id="4.2.1.9"/>
    </reaction>
    <physiologicalReaction direction="left-to-right" evidence="1">
        <dbReference type="Rhea" id="RHEA:27695"/>
    </physiologicalReaction>
</comment>
<comment type="cofactor">
    <cofactor evidence="1">
        <name>[2Fe-2S] cluster</name>
        <dbReference type="ChEBI" id="CHEBI:190135"/>
    </cofactor>
    <text evidence="1">Binds 1 [2Fe-2S] cluster per subunit. This cluster acts as a Lewis acid cofactor.</text>
</comment>
<comment type="cofactor">
    <cofactor evidence="1">
        <name>Mg(2+)</name>
        <dbReference type="ChEBI" id="CHEBI:18420"/>
    </cofactor>
</comment>
<comment type="pathway">
    <text evidence="1">Amino-acid biosynthesis; L-isoleucine biosynthesis; L-isoleucine from 2-oxobutanoate: step 3/4.</text>
</comment>
<comment type="pathway">
    <text evidence="1">Amino-acid biosynthesis; L-valine biosynthesis; L-valine from pyruvate: step 3/4.</text>
</comment>
<comment type="subunit">
    <text evidence="1">Homodimer.</text>
</comment>
<comment type="similarity">
    <text evidence="1">Belongs to the IlvD/Edd family.</text>
</comment>
<feature type="chain" id="PRO_0000225425" description="Dihydroxy-acid dehydratase">
    <location>
        <begin position="1"/>
        <end position="562"/>
    </location>
</feature>
<feature type="active site" description="Proton acceptor" evidence="1">
    <location>
        <position position="472"/>
    </location>
</feature>
<feature type="binding site" evidence="1">
    <location>
        <position position="80"/>
    </location>
    <ligand>
        <name>Mg(2+)</name>
        <dbReference type="ChEBI" id="CHEBI:18420"/>
    </ligand>
</feature>
<feature type="binding site" evidence="1">
    <location>
        <position position="121"/>
    </location>
    <ligand>
        <name>[2Fe-2S] cluster</name>
        <dbReference type="ChEBI" id="CHEBI:190135"/>
    </ligand>
</feature>
<feature type="binding site" evidence="1">
    <location>
        <position position="122"/>
    </location>
    <ligand>
        <name>Mg(2+)</name>
        <dbReference type="ChEBI" id="CHEBI:18420"/>
    </ligand>
</feature>
<feature type="binding site" description="via carbamate group" evidence="1">
    <location>
        <position position="123"/>
    </location>
    <ligand>
        <name>Mg(2+)</name>
        <dbReference type="ChEBI" id="CHEBI:18420"/>
    </ligand>
</feature>
<feature type="binding site" evidence="1">
    <location>
        <position position="194"/>
    </location>
    <ligand>
        <name>[2Fe-2S] cluster</name>
        <dbReference type="ChEBI" id="CHEBI:190135"/>
    </ligand>
</feature>
<feature type="binding site" evidence="1">
    <location>
        <position position="446"/>
    </location>
    <ligand>
        <name>Mg(2+)</name>
        <dbReference type="ChEBI" id="CHEBI:18420"/>
    </ligand>
</feature>
<feature type="modified residue" description="N6-carboxylysine" evidence="1">
    <location>
        <position position="123"/>
    </location>
</feature>
<reference key="1">
    <citation type="journal article" date="2005" name="J. Bacteriol.">
        <title>Whole-genome sequencing of Staphylococcus haemolyticus uncovers the extreme plasticity of its genome and the evolution of human-colonizing staphylococcal species.</title>
        <authorList>
            <person name="Takeuchi F."/>
            <person name="Watanabe S."/>
            <person name="Baba T."/>
            <person name="Yuzawa H."/>
            <person name="Ito T."/>
            <person name="Morimoto Y."/>
            <person name="Kuroda M."/>
            <person name="Cui L."/>
            <person name="Takahashi M."/>
            <person name="Ankai A."/>
            <person name="Baba S."/>
            <person name="Fukui S."/>
            <person name="Lee J.C."/>
            <person name="Hiramatsu K."/>
        </authorList>
    </citation>
    <scope>NUCLEOTIDE SEQUENCE [LARGE SCALE GENOMIC DNA]</scope>
    <source>
        <strain>JCSC1435</strain>
    </source>
</reference>
<proteinExistence type="inferred from homology"/>
<sequence>MRSDMIKKGDHQAPARSLLHATGALKNPTDMNKPFVAICNSYIDIVPGHVHLRELADIAKEAIREAGAIPFEFNTIGVDDGIAMGHIGMRYSLPSREIIADAAETVINAHWFDGVFYIPNCDKITPGMLLAAVRTNVPAIFCSGGPMKAGLSAQGKALTLSSMFEAVGAFKEGKLSKEAFLDMEQNACPTCGSCAGMFTANSMNCLMEVLGLALPYNGTALAVSEQRREMIREAAFKLVDNIKKDIKPLDIVTREAIDDAFALDMAMGGSTNTVLHTLAIANEAGIDYDLERINEIAKKTPYLSKIAPSSSYSMHDVHEAGGCPAIINELMKKEGTLHPDRLTVTGKTLRENNEGKEIKNFDVIHSLDDPYDKQGGLSILFGNIAPKGAVIKVGGVDPSIKIFTGKAICFNSHDEAVEAIDNKIVREGHVVVIRYEGPKGGPGMPEMLAPTSSIVGRGLGKDVALITDGRFSGATRGIAVGHISPEAASGGPIGLIKDGDEVTIDLINRTLNVNQTKEELNHRKEALQPFKAKVKSGYLARYTALVTSANTGGIMQVPENLI</sequence>
<accession>Q4L7T6</accession>
<protein>
    <recommendedName>
        <fullName evidence="1">Dihydroxy-acid dehydratase</fullName>
        <shortName evidence="1">DAD</shortName>
        <ecNumber evidence="1">4.2.1.9</ecNumber>
    </recommendedName>
</protein>
<keyword id="KW-0001">2Fe-2S</keyword>
<keyword id="KW-0028">Amino-acid biosynthesis</keyword>
<keyword id="KW-0100">Branched-chain amino acid biosynthesis</keyword>
<keyword id="KW-0408">Iron</keyword>
<keyword id="KW-0411">Iron-sulfur</keyword>
<keyword id="KW-0456">Lyase</keyword>
<keyword id="KW-0460">Magnesium</keyword>
<keyword id="KW-0479">Metal-binding</keyword>
<gene>
    <name evidence="1" type="primary">ilvD</name>
    <name type="ordered locus">SH0980</name>
</gene>
<evidence type="ECO:0000255" key="1">
    <source>
        <dbReference type="HAMAP-Rule" id="MF_00012"/>
    </source>
</evidence>